<organism>
    <name type="scientific">Mycobacterium sp. (strain MCS)</name>
    <dbReference type="NCBI Taxonomy" id="164756"/>
    <lineage>
        <taxon>Bacteria</taxon>
        <taxon>Bacillati</taxon>
        <taxon>Actinomycetota</taxon>
        <taxon>Actinomycetes</taxon>
        <taxon>Mycobacteriales</taxon>
        <taxon>Mycobacteriaceae</taxon>
        <taxon>Mycobacterium</taxon>
    </lineage>
</organism>
<accession>Q1B554</accession>
<dbReference type="EMBL" id="CP000384">
    <property type="protein sequence ID" value="ABG09980.1"/>
    <property type="molecule type" value="Genomic_DNA"/>
</dbReference>
<dbReference type="SMR" id="Q1B554"/>
<dbReference type="KEGG" id="mmc:Mmcs_3875"/>
<dbReference type="HOGENOM" id="CLU_084338_4_0_11"/>
<dbReference type="BioCyc" id="MSP164756:G1G6O-3959-MONOMER"/>
<dbReference type="GO" id="GO:0005886">
    <property type="term" value="C:plasma membrane"/>
    <property type="evidence" value="ECO:0007669"/>
    <property type="project" value="UniProtKB-SubCell"/>
</dbReference>
<dbReference type="GO" id="GO:0045259">
    <property type="term" value="C:proton-transporting ATP synthase complex"/>
    <property type="evidence" value="ECO:0007669"/>
    <property type="project" value="UniProtKB-KW"/>
</dbReference>
<dbReference type="GO" id="GO:0005524">
    <property type="term" value="F:ATP binding"/>
    <property type="evidence" value="ECO:0007669"/>
    <property type="project" value="UniProtKB-UniRule"/>
</dbReference>
<dbReference type="GO" id="GO:0046933">
    <property type="term" value="F:proton-transporting ATP synthase activity, rotational mechanism"/>
    <property type="evidence" value="ECO:0007669"/>
    <property type="project" value="UniProtKB-UniRule"/>
</dbReference>
<dbReference type="CDD" id="cd12152">
    <property type="entry name" value="F1-ATPase_delta"/>
    <property type="match status" value="1"/>
</dbReference>
<dbReference type="Gene3D" id="2.60.15.10">
    <property type="entry name" value="F0F1 ATP synthase delta/epsilon subunit, N-terminal"/>
    <property type="match status" value="1"/>
</dbReference>
<dbReference type="HAMAP" id="MF_00530">
    <property type="entry name" value="ATP_synth_epsil_bac"/>
    <property type="match status" value="1"/>
</dbReference>
<dbReference type="InterPro" id="IPR001469">
    <property type="entry name" value="ATP_synth_F1_dsu/esu"/>
</dbReference>
<dbReference type="InterPro" id="IPR020546">
    <property type="entry name" value="ATP_synth_F1_dsu/esu_N"/>
</dbReference>
<dbReference type="InterPro" id="IPR036771">
    <property type="entry name" value="ATPsynth_dsu/esu_N"/>
</dbReference>
<dbReference type="NCBIfam" id="TIGR01216">
    <property type="entry name" value="ATP_synt_epsi"/>
    <property type="match status" value="1"/>
</dbReference>
<dbReference type="NCBIfam" id="NF009977">
    <property type="entry name" value="PRK13442.1"/>
    <property type="match status" value="1"/>
</dbReference>
<dbReference type="PANTHER" id="PTHR13822">
    <property type="entry name" value="ATP SYNTHASE DELTA/EPSILON CHAIN"/>
    <property type="match status" value="1"/>
</dbReference>
<dbReference type="PANTHER" id="PTHR13822:SF10">
    <property type="entry name" value="ATP SYNTHASE EPSILON CHAIN, CHLOROPLASTIC"/>
    <property type="match status" value="1"/>
</dbReference>
<dbReference type="Pfam" id="PF02823">
    <property type="entry name" value="ATP-synt_DE_N"/>
    <property type="match status" value="1"/>
</dbReference>
<dbReference type="SUPFAM" id="SSF51344">
    <property type="entry name" value="Epsilon subunit of F1F0-ATP synthase N-terminal domain"/>
    <property type="match status" value="1"/>
</dbReference>
<evidence type="ECO:0000255" key="1">
    <source>
        <dbReference type="HAMAP-Rule" id="MF_00530"/>
    </source>
</evidence>
<keyword id="KW-0066">ATP synthesis</keyword>
<keyword id="KW-1003">Cell membrane</keyword>
<keyword id="KW-0139">CF(1)</keyword>
<keyword id="KW-0375">Hydrogen ion transport</keyword>
<keyword id="KW-0406">Ion transport</keyword>
<keyword id="KW-0472">Membrane</keyword>
<keyword id="KW-0813">Transport</keyword>
<sequence>MADLDVDIVAVEREIWSGKATFVFTRTTSGEIGILPRHIPLVAQLVDDAMVRVEREGEEDLRVAVGGGFMSVTESGVIILAETAELESEINADEARRDSESDDPATAARGRARLRALGQID</sequence>
<comment type="function">
    <text evidence="1">Produces ATP from ADP in the presence of a proton gradient across the membrane.</text>
</comment>
<comment type="subunit">
    <text>F-type ATPases have 2 components, CF(1) - the catalytic core - and CF(0) - the membrane proton channel. CF(1) has five subunits: alpha(3), beta(3), gamma(1), delta(1), epsilon(1). CF(0) has three main subunits: a, b and c.</text>
</comment>
<comment type="subcellular location">
    <subcellularLocation>
        <location evidence="1">Cell membrane</location>
        <topology evidence="1">Peripheral membrane protein</topology>
    </subcellularLocation>
</comment>
<comment type="similarity">
    <text evidence="1">Belongs to the ATPase epsilon chain family.</text>
</comment>
<feature type="chain" id="PRO_0000265841" description="ATP synthase epsilon chain">
    <location>
        <begin position="1"/>
        <end position="121"/>
    </location>
</feature>
<reference key="1">
    <citation type="submission" date="2006-06" db="EMBL/GenBank/DDBJ databases">
        <title>Complete sequence of chromosome of Mycobacterium sp. MCS.</title>
        <authorList>
            <consortium name="US DOE Joint Genome Institute"/>
            <person name="Copeland A."/>
            <person name="Lucas S."/>
            <person name="Lapidus A."/>
            <person name="Barry K."/>
            <person name="Detter J.C."/>
            <person name="Glavina del Rio T."/>
            <person name="Hammon N."/>
            <person name="Israni S."/>
            <person name="Dalin E."/>
            <person name="Tice H."/>
            <person name="Pitluck S."/>
            <person name="Martinez M."/>
            <person name="Schmutz J."/>
            <person name="Larimer F."/>
            <person name="Land M."/>
            <person name="Hauser L."/>
            <person name="Kyrpides N."/>
            <person name="Kim E."/>
            <person name="Miller C.D."/>
            <person name="Hughes J.E."/>
            <person name="Anderson A.J."/>
            <person name="Sims R.C."/>
            <person name="Richardson P."/>
        </authorList>
    </citation>
    <scope>NUCLEOTIDE SEQUENCE [LARGE SCALE GENOMIC DNA]</scope>
    <source>
        <strain>MCS</strain>
    </source>
</reference>
<protein>
    <recommendedName>
        <fullName evidence="1">ATP synthase epsilon chain</fullName>
    </recommendedName>
    <alternativeName>
        <fullName evidence="1">ATP synthase F1 sector epsilon subunit</fullName>
    </alternativeName>
    <alternativeName>
        <fullName evidence="1">F-ATPase epsilon subunit</fullName>
    </alternativeName>
</protein>
<gene>
    <name evidence="1" type="primary">atpC</name>
    <name type="ordered locus">Mmcs_3875</name>
</gene>
<proteinExistence type="inferred from homology"/>
<name>ATPE_MYCSS</name>